<dbReference type="EMBL" id="CP000813">
    <property type="protein sequence ID" value="ABV63107.2"/>
    <property type="molecule type" value="Genomic_DNA"/>
</dbReference>
<dbReference type="RefSeq" id="WP_041815794.1">
    <property type="nucleotide sequence ID" value="NC_009848.4"/>
</dbReference>
<dbReference type="SMR" id="A8FFU0"/>
<dbReference type="STRING" id="315750.BPUM_2444"/>
<dbReference type="GeneID" id="5621708"/>
<dbReference type="KEGG" id="bpu:BPUM_2444"/>
<dbReference type="eggNOG" id="COG2003">
    <property type="taxonomic scope" value="Bacteria"/>
</dbReference>
<dbReference type="HOGENOM" id="CLU_073529_0_2_9"/>
<dbReference type="OrthoDB" id="9804482at2"/>
<dbReference type="Proteomes" id="UP000001355">
    <property type="component" value="Chromosome"/>
</dbReference>
<dbReference type="GO" id="GO:0046872">
    <property type="term" value="F:metal ion binding"/>
    <property type="evidence" value="ECO:0007669"/>
    <property type="project" value="UniProtKB-KW"/>
</dbReference>
<dbReference type="GO" id="GO:0008237">
    <property type="term" value="F:metallopeptidase activity"/>
    <property type="evidence" value="ECO:0007669"/>
    <property type="project" value="UniProtKB-KW"/>
</dbReference>
<dbReference type="GO" id="GO:0006508">
    <property type="term" value="P:proteolysis"/>
    <property type="evidence" value="ECO:0007669"/>
    <property type="project" value="UniProtKB-KW"/>
</dbReference>
<dbReference type="CDD" id="cd08071">
    <property type="entry name" value="MPN_DUF2466"/>
    <property type="match status" value="1"/>
</dbReference>
<dbReference type="Gene3D" id="1.10.150.20">
    <property type="entry name" value="5' to 3' exonuclease, C-terminal subdomain"/>
    <property type="match status" value="1"/>
</dbReference>
<dbReference type="Gene3D" id="3.40.140.10">
    <property type="entry name" value="Cytidine Deaminase, domain 2"/>
    <property type="match status" value="1"/>
</dbReference>
<dbReference type="InterPro" id="IPR037518">
    <property type="entry name" value="MPN"/>
</dbReference>
<dbReference type="InterPro" id="IPR025657">
    <property type="entry name" value="RadC_JAB"/>
</dbReference>
<dbReference type="InterPro" id="IPR010994">
    <property type="entry name" value="RuvA_2-like"/>
</dbReference>
<dbReference type="InterPro" id="IPR001405">
    <property type="entry name" value="UPF0758"/>
</dbReference>
<dbReference type="InterPro" id="IPR020891">
    <property type="entry name" value="UPF0758_CS"/>
</dbReference>
<dbReference type="InterPro" id="IPR046778">
    <property type="entry name" value="UPF0758_N"/>
</dbReference>
<dbReference type="NCBIfam" id="NF000642">
    <property type="entry name" value="PRK00024.1"/>
    <property type="match status" value="1"/>
</dbReference>
<dbReference type="NCBIfam" id="TIGR00608">
    <property type="entry name" value="radc"/>
    <property type="match status" value="1"/>
</dbReference>
<dbReference type="PANTHER" id="PTHR30471">
    <property type="entry name" value="DNA REPAIR PROTEIN RADC"/>
    <property type="match status" value="1"/>
</dbReference>
<dbReference type="PANTHER" id="PTHR30471:SF3">
    <property type="entry name" value="UPF0758 PROTEIN YEES-RELATED"/>
    <property type="match status" value="1"/>
</dbReference>
<dbReference type="Pfam" id="PF04002">
    <property type="entry name" value="RadC"/>
    <property type="match status" value="1"/>
</dbReference>
<dbReference type="Pfam" id="PF20582">
    <property type="entry name" value="UPF0758_N"/>
    <property type="match status" value="1"/>
</dbReference>
<dbReference type="SUPFAM" id="SSF102712">
    <property type="entry name" value="JAB1/MPN domain"/>
    <property type="match status" value="1"/>
</dbReference>
<dbReference type="SUPFAM" id="SSF47781">
    <property type="entry name" value="RuvA domain 2-like"/>
    <property type="match status" value="1"/>
</dbReference>
<dbReference type="PROSITE" id="PS50249">
    <property type="entry name" value="MPN"/>
    <property type="match status" value="1"/>
</dbReference>
<dbReference type="PROSITE" id="PS01302">
    <property type="entry name" value="UPF0758"/>
    <property type="match status" value="1"/>
</dbReference>
<organism>
    <name type="scientific">Bacillus pumilus (strain SAFR-032)</name>
    <dbReference type="NCBI Taxonomy" id="315750"/>
    <lineage>
        <taxon>Bacteria</taxon>
        <taxon>Bacillati</taxon>
        <taxon>Bacillota</taxon>
        <taxon>Bacilli</taxon>
        <taxon>Bacillales</taxon>
        <taxon>Bacillaceae</taxon>
        <taxon>Bacillus</taxon>
    </lineage>
</organism>
<accession>A8FFU0</accession>
<evidence type="ECO:0000255" key="1">
    <source>
        <dbReference type="PROSITE-ProRule" id="PRU01182"/>
    </source>
</evidence>
<evidence type="ECO:0000305" key="2"/>
<proteinExistence type="inferred from homology"/>
<name>Y2444_BACP2</name>
<gene>
    <name type="ordered locus">BPUM_2444</name>
</gene>
<sequence>MLLKHFPHDEKPRERFIKYGPSSLSNHELVAILLRTGTKKESVLQISARLLQTFGGLRSVREATIEEMSKIRGVGKAKAISLLAALELGTRLHHQTTDNRYVIRTPEDGANFVMEDMRFLTQENFVCLYLNTKNQVLHKHTVFIGSLNSSIVHPREIFKEAFKRSAASFICVHNHPSGDPTPSREDIEVTQRLFECGKLIGIQLLDHLVIGDQKFVSLKEKGYL</sequence>
<feature type="chain" id="PRO_0000322667" description="UPF0758 protein BPUM_2444">
    <location>
        <begin position="1"/>
        <end position="224"/>
    </location>
</feature>
<feature type="domain" description="MPN" evidence="1">
    <location>
        <begin position="102"/>
        <end position="224"/>
    </location>
</feature>
<feature type="short sequence motif" description="JAMM motif" evidence="1">
    <location>
        <begin position="173"/>
        <end position="186"/>
    </location>
</feature>
<feature type="binding site" evidence="1">
    <location>
        <position position="173"/>
    </location>
    <ligand>
        <name>Zn(2+)</name>
        <dbReference type="ChEBI" id="CHEBI:29105"/>
        <note>catalytic</note>
    </ligand>
</feature>
<feature type="binding site" evidence="1">
    <location>
        <position position="175"/>
    </location>
    <ligand>
        <name>Zn(2+)</name>
        <dbReference type="ChEBI" id="CHEBI:29105"/>
        <note>catalytic</note>
    </ligand>
</feature>
<feature type="binding site" evidence="1">
    <location>
        <position position="186"/>
    </location>
    <ligand>
        <name>Zn(2+)</name>
        <dbReference type="ChEBI" id="CHEBI:29105"/>
        <note>catalytic</note>
    </ligand>
</feature>
<comment type="similarity">
    <text evidence="2">Belongs to the UPF0758 family.</text>
</comment>
<keyword id="KW-0378">Hydrolase</keyword>
<keyword id="KW-0479">Metal-binding</keyword>
<keyword id="KW-0482">Metalloprotease</keyword>
<keyword id="KW-0645">Protease</keyword>
<keyword id="KW-0862">Zinc</keyword>
<protein>
    <recommendedName>
        <fullName>UPF0758 protein BPUM_2444</fullName>
    </recommendedName>
</protein>
<reference key="1">
    <citation type="journal article" date="2007" name="PLoS ONE">
        <title>Paradoxical DNA repair and peroxide resistance gene conservation in Bacillus pumilus SAFR-032.</title>
        <authorList>
            <person name="Gioia J."/>
            <person name="Yerrapragada S."/>
            <person name="Qin X."/>
            <person name="Jiang H."/>
            <person name="Igboeli O.C."/>
            <person name="Muzny D."/>
            <person name="Dugan-Rocha S."/>
            <person name="Ding Y."/>
            <person name="Hawes A."/>
            <person name="Liu W."/>
            <person name="Perez L."/>
            <person name="Kovar C."/>
            <person name="Dinh H."/>
            <person name="Lee S."/>
            <person name="Nazareth L."/>
            <person name="Blyth P."/>
            <person name="Holder M."/>
            <person name="Buhay C."/>
            <person name="Tirumalai M.R."/>
            <person name="Liu Y."/>
            <person name="Dasgupta I."/>
            <person name="Bokhetache L."/>
            <person name="Fujita M."/>
            <person name="Karouia F."/>
            <person name="Eswara Moorthy P."/>
            <person name="Siefert J."/>
            <person name="Uzman A."/>
            <person name="Buzumbo P."/>
            <person name="Verma A."/>
            <person name="Zwiya H."/>
            <person name="McWilliams B.D."/>
            <person name="Olowu A."/>
            <person name="Clinkenbeard K.D."/>
            <person name="Newcombe D."/>
            <person name="Golebiewski L."/>
            <person name="Petrosino J.F."/>
            <person name="Nicholson W.L."/>
            <person name="Fox G.E."/>
            <person name="Venkateswaran K."/>
            <person name="Highlander S.K."/>
            <person name="Weinstock G.M."/>
        </authorList>
    </citation>
    <scope>NUCLEOTIDE SEQUENCE [LARGE SCALE GENOMIC DNA]</scope>
    <source>
        <strain>SAFR-032</strain>
    </source>
</reference>
<reference key="2">
    <citation type="journal article" date="2016" name="PLoS ONE">
        <title>Bacillus pumilus SAFR-032 Genome Revisited: Sequence Update and Re-Annotation.</title>
        <authorList>
            <person name="Stepanov V.G."/>
            <person name="Tirumalai M.R."/>
            <person name="Montazari S."/>
            <person name="Checinska A."/>
            <person name="Venkateswaran K."/>
            <person name="Fox G.E."/>
        </authorList>
    </citation>
    <scope>SEQUENCE REVISION TO N-TERMINUS</scope>
    <source>
        <strain>SAFR-032</strain>
    </source>
</reference>